<gene>
    <name evidence="1" type="primary">folD</name>
    <name type="ordered locus">VFMJ11_1898</name>
</gene>
<name>FOLD_ALIFM</name>
<feature type="chain" id="PRO_1000147536" description="Bifunctional protein FolD">
    <location>
        <begin position="1"/>
        <end position="285"/>
    </location>
</feature>
<feature type="binding site" evidence="1">
    <location>
        <begin position="166"/>
        <end position="168"/>
    </location>
    <ligand>
        <name>NADP(+)</name>
        <dbReference type="ChEBI" id="CHEBI:58349"/>
    </ligand>
</feature>
<feature type="binding site" evidence="1">
    <location>
        <position position="232"/>
    </location>
    <ligand>
        <name>NADP(+)</name>
        <dbReference type="ChEBI" id="CHEBI:58349"/>
    </ligand>
</feature>
<keyword id="KW-0028">Amino-acid biosynthesis</keyword>
<keyword id="KW-0368">Histidine biosynthesis</keyword>
<keyword id="KW-0378">Hydrolase</keyword>
<keyword id="KW-0486">Methionine biosynthesis</keyword>
<keyword id="KW-0511">Multifunctional enzyme</keyword>
<keyword id="KW-0521">NADP</keyword>
<keyword id="KW-0554">One-carbon metabolism</keyword>
<keyword id="KW-0560">Oxidoreductase</keyword>
<keyword id="KW-0658">Purine biosynthesis</keyword>
<proteinExistence type="inferred from homology"/>
<protein>
    <recommendedName>
        <fullName evidence="1">Bifunctional protein FolD</fullName>
    </recommendedName>
    <domain>
        <recommendedName>
            <fullName evidence="1">Methylenetetrahydrofolate dehydrogenase</fullName>
            <ecNumber evidence="1">1.5.1.5</ecNumber>
        </recommendedName>
    </domain>
    <domain>
        <recommendedName>
            <fullName evidence="1">Methenyltetrahydrofolate cyclohydrolase</fullName>
            <ecNumber evidence="1">3.5.4.9</ecNumber>
        </recommendedName>
    </domain>
</protein>
<reference key="1">
    <citation type="submission" date="2008-08" db="EMBL/GenBank/DDBJ databases">
        <title>Complete sequence of Vibrio fischeri strain MJ11.</title>
        <authorList>
            <person name="Mandel M.J."/>
            <person name="Stabb E.V."/>
            <person name="Ruby E.G."/>
            <person name="Ferriera S."/>
            <person name="Johnson J."/>
            <person name="Kravitz S."/>
            <person name="Beeson K."/>
            <person name="Sutton G."/>
            <person name="Rogers Y.-H."/>
            <person name="Friedman R."/>
            <person name="Frazier M."/>
            <person name="Venter J.C."/>
        </authorList>
    </citation>
    <scope>NUCLEOTIDE SEQUENCE [LARGE SCALE GENOMIC DNA]</scope>
    <source>
        <strain>MJ11</strain>
    </source>
</reference>
<accession>B5FG69</accession>
<organism>
    <name type="scientific">Aliivibrio fischeri (strain MJ11)</name>
    <name type="common">Vibrio fischeri</name>
    <dbReference type="NCBI Taxonomy" id="388396"/>
    <lineage>
        <taxon>Bacteria</taxon>
        <taxon>Pseudomonadati</taxon>
        <taxon>Pseudomonadota</taxon>
        <taxon>Gammaproteobacteria</taxon>
        <taxon>Vibrionales</taxon>
        <taxon>Vibrionaceae</taxon>
        <taxon>Aliivibrio</taxon>
    </lineage>
</organism>
<sequence length="285" mass="30790">MTAQIIDGKLISQTVRSEVGARVKARVEAGLRAPGLAVVLVGQDPASQVYVGSKRRACEEVGFVSKSYDLPTTTSESELLNLIDELNQDPEIDGILVQLPLPAGMDSTKILEHIDPEKDVDGFHPYNVGRLSQRIPKLRSCTPKGIITLLDRYNIQVRGMHAVVVGASNIVGRPMTLELLLAGCTTTTCHRFTKDLESHIRQADLVVVAVGKPNFIPGEWIKEGAVVVDVGINRLDSGKLIGDVEYDVAKTKASYITPVPGGVGPMTVATLIENTLLACEQYHSK</sequence>
<dbReference type="EC" id="1.5.1.5" evidence="1"/>
<dbReference type="EC" id="3.5.4.9" evidence="1"/>
<dbReference type="EMBL" id="CP001139">
    <property type="protein sequence ID" value="ACH66346.1"/>
    <property type="molecule type" value="Genomic_DNA"/>
</dbReference>
<dbReference type="RefSeq" id="WP_005420192.1">
    <property type="nucleotide sequence ID" value="NC_011184.1"/>
</dbReference>
<dbReference type="SMR" id="B5FG69"/>
<dbReference type="GeneID" id="54164470"/>
<dbReference type="KEGG" id="vfm:VFMJ11_1898"/>
<dbReference type="HOGENOM" id="CLU_034045_2_1_6"/>
<dbReference type="UniPathway" id="UPA00193"/>
<dbReference type="Proteomes" id="UP000001857">
    <property type="component" value="Chromosome I"/>
</dbReference>
<dbReference type="GO" id="GO:0005829">
    <property type="term" value="C:cytosol"/>
    <property type="evidence" value="ECO:0007669"/>
    <property type="project" value="TreeGrafter"/>
</dbReference>
<dbReference type="GO" id="GO:0004477">
    <property type="term" value="F:methenyltetrahydrofolate cyclohydrolase activity"/>
    <property type="evidence" value="ECO:0007669"/>
    <property type="project" value="UniProtKB-UniRule"/>
</dbReference>
<dbReference type="GO" id="GO:0004488">
    <property type="term" value="F:methylenetetrahydrofolate dehydrogenase (NADP+) activity"/>
    <property type="evidence" value="ECO:0007669"/>
    <property type="project" value="UniProtKB-UniRule"/>
</dbReference>
<dbReference type="GO" id="GO:0000105">
    <property type="term" value="P:L-histidine biosynthetic process"/>
    <property type="evidence" value="ECO:0007669"/>
    <property type="project" value="UniProtKB-KW"/>
</dbReference>
<dbReference type="GO" id="GO:0009086">
    <property type="term" value="P:methionine biosynthetic process"/>
    <property type="evidence" value="ECO:0007669"/>
    <property type="project" value="UniProtKB-KW"/>
</dbReference>
<dbReference type="GO" id="GO:0006164">
    <property type="term" value="P:purine nucleotide biosynthetic process"/>
    <property type="evidence" value="ECO:0007669"/>
    <property type="project" value="UniProtKB-KW"/>
</dbReference>
<dbReference type="GO" id="GO:0035999">
    <property type="term" value="P:tetrahydrofolate interconversion"/>
    <property type="evidence" value="ECO:0007669"/>
    <property type="project" value="UniProtKB-UniRule"/>
</dbReference>
<dbReference type="CDD" id="cd01080">
    <property type="entry name" value="NAD_bind_m-THF_DH_Cyclohyd"/>
    <property type="match status" value="1"/>
</dbReference>
<dbReference type="FunFam" id="3.40.50.10860:FF:000001">
    <property type="entry name" value="Bifunctional protein FolD"/>
    <property type="match status" value="1"/>
</dbReference>
<dbReference type="FunFam" id="3.40.50.720:FF:000006">
    <property type="entry name" value="Bifunctional protein FolD"/>
    <property type="match status" value="1"/>
</dbReference>
<dbReference type="Gene3D" id="3.40.50.10860">
    <property type="entry name" value="Leucine Dehydrogenase, chain A, domain 1"/>
    <property type="match status" value="1"/>
</dbReference>
<dbReference type="Gene3D" id="3.40.50.720">
    <property type="entry name" value="NAD(P)-binding Rossmann-like Domain"/>
    <property type="match status" value="1"/>
</dbReference>
<dbReference type="HAMAP" id="MF_01576">
    <property type="entry name" value="THF_DHG_CYH"/>
    <property type="match status" value="1"/>
</dbReference>
<dbReference type="InterPro" id="IPR046346">
    <property type="entry name" value="Aminoacid_DH-like_N_sf"/>
</dbReference>
<dbReference type="InterPro" id="IPR036291">
    <property type="entry name" value="NAD(P)-bd_dom_sf"/>
</dbReference>
<dbReference type="InterPro" id="IPR000672">
    <property type="entry name" value="THF_DH/CycHdrlase"/>
</dbReference>
<dbReference type="InterPro" id="IPR020630">
    <property type="entry name" value="THF_DH/CycHdrlase_cat_dom"/>
</dbReference>
<dbReference type="InterPro" id="IPR020867">
    <property type="entry name" value="THF_DH/CycHdrlase_CS"/>
</dbReference>
<dbReference type="InterPro" id="IPR020631">
    <property type="entry name" value="THF_DH/CycHdrlase_NAD-bd_dom"/>
</dbReference>
<dbReference type="NCBIfam" id="NF008058">
    <property type="entry name" value="PRK10792.1"/>
    <property type="match status" value="1"/>
</dbReference>
<dbReference type="NCBIfam" id="NF010783">
    <property type="entry name" value="PRK14186.1"/>
    <property type="match status" value="1"/>
</dbReference>
<dbReference type="PANTHER" id="PTHR48099:SF5">
    <property type="entry name" value="C-1-TETRAHYDROFOLATE SYNTHASE, CYTOPLASMIC"/>
    <property type="match status" value="1"/>
</dbReference>
<dbReference type="PANTHER" id="PTHR48099">
    <property type="entry name" value="C-1-TETRAHYDROFOLATE SYNTHASE, CYTOPLASMIC-RELATED"/>
    <property type="match status" value="1"/>
</dbReference>
<dbReference type="Pfam" id="PF00763">
    <property type="entry name" value="THF_DHG_CYH"/>
    <property type="match status" value="1"/>
</dbReference>
<dbReference type="Pfam" id="PF02882">
    <property type="entry name" value="THF_DHG_CYH_C"/>
    <property type="match status" value="1"/>
</dbReference>
<dbReference type="PRINTS" id="PR00085">
    <property type="entry name" value="THFDHDRGNASE"/>
</dbReference>
<dbReference type="SUPFAM" id="SSF53223">
    <property type="entry name" value="Aminoacid dehydrogenase-like, N-terminal domain"/>
    <property type="match status" value="1"/>
</dbReference>
<dbReference type="SUPFAM" id="SSF51735">
    <property type="entry name" value="NAD(P)-binding Rossmann-fold domains"/>
    <property type="match status" value="1"/>
</dbReference>
<dbReference type="PROSITE" id="PS00766">
    <property type="entry name" value="THF_DHG_CYH_1"/>
    <property type="match status" value="1"/>
</dbReference>
<dbReference type="PROSITE" id="PS00767">
    <property type="entry name" value="THF_DHG_CYH_2"/>
    <property type="match status" value="1"/>
</dbReference>
<evidence type="ECO:0000255" key="1">
    <source>
        <dbReference type="HAMAP-Rule" id="MF_01576"/>
    </source>
</evidence>
<comment type="function">
    <text evidence="1">Catalyzes the oxidation of 5,10-methylenetetrahydrofolate to 5,10-methenyltetrahydrofolate and then the hydrolysis of 5,10-methenyltetrahydrofolate to 10-formyltetrahydrofolate.</text>
</comment>
<comment type="catalytic activity">
    <reaction evidence="1">
        <text>(6R)-5,10-methylene-5,6,7,8-tetrahydrofolate + NADP(+) = (6R)-5,10-methenyltetrahydrofolate + NADPH</text>
        <dbReference type="Rhea" id="RHEA:22812"/>
        <dbReference type="ChEBI" id="CHEBI:15636"/>
        <dbReference type="ChEBI" id="CHEBI:57455"/>
        <dbReference type="ChEBI" id="CHEBI:57783"/>
        <dbReference type="ChEBI" id="CHEBI:58349"/>
        <dbReference type="EC" id="1.5.1.5"/>
    </reaction>
</comment>
<comment type="catalytic activity">
    <reaction evidence="1">
        <text>(6R)-5,10-methenyltetrahydrofolate + H2O = (6R)-10-formyltetrahydrofolate + H(+)</text>
        <dbReference type="Rhea" id="RHEA:23700"/>
        <dbReference type="ChEBI" id="CHEBI:15377"/>
        <dbReference type="ChEBI" id="CHEBI:15378"/>
        <dbReference type="ChEBI" id="CHEBI:57455"/>
        <dbReference type="ChEBI" id="CHEBI:195366"/>
        <dbReference type="EC" id="3.5.4.9"/>
    </reaction>
</comment>
<comment type="pathway">
    <text evidence="1">One-carbon metabolism; tetrahydrofolate interconversion.</text>
</comment>
<comment type="subunit">
    <text evidence="1">Homodimer.</text>
</comment>
<comment type="similarity">
    <text evidence="1">Belongs to the tetrahydrofolate dehydrogenase/cyclohydrolase family.</text>
</comment>